<accession>Q2YJ11</accession>
<organism>
    <name type="scientific">Brucella abortus (strain 2308)</name>
    <dbReference type="NCBI Taxonomy" id="359391"/>
    <lineage>
        <taxon>Bacteria</taxon>
        <taxon>Pseudomonadati</taxon>
        <taxon>Pseudomonadota</taxon>
        <taxon>Alphaproteobacteria</taxon>
        <taxon>Hyphomicrobiales</taxon>
        <taxon>Brucellaceae</taxon>
        <taxon>Brucella/Ochrobactrum group</taxon>
        <taxon>Brucella</taxon>
    </lineage>
</organism>
<reference key="1">
    <citation type="journal article" date="2005" name="Infect. Immun.">
        <title>Whole-genome analyses of speciation events in pathogenic Brucellae.</title>
        <authorList>
            <person name="Chain P.S."/>
            <person name="Comerci D.J."/>
            <person name="Tolmasky M.E."/>
            <person name="Larimer F.W."/>
            <person name="Malfatti S.A."/>
            <person name="Vergez L.M."/>
            <person name="Aguero F."/>
            <person name="Land M.L."/>
            <person name="Ugalde R.A."/>
            <person name="Garcia E."/>
        </authorList>
    </citation>
    <scope>NUCLEOTIDE SEQUENCE [LARGE SCALE GENOMIC DNA]</scope>
    <source>
        <strain>2308</strain>
    </source>
</reference>
<comment type="similarity">
    <text evidence="1">Belongs to the UPF0309 family.</text>
</comment>
<dbReference type="EMBL" id="AM040265">
    <property type="protein sequence ID" value="CAJ12491.1"/>
    <property type="molecule type" value="Genomic_DNA"/>
</dbReference>
<dbReference type="RefSeq" id="WP_002965737.1">
    <property type="nucleotide sequence ID" value="NZ_KN046823.1"/>
</dbReference>
<dbReference type="SMR" id="Q2YJ11"/>
<dbReference type="STRING" id="359391.BAB2_0325"/>
<dbReference type="KEGG" id="bmf:BAB2_0325"/>
<dbReference type="PATRIC" id="fig|359391.11.peg.2279"/>
<dbReference type="HOGENOM" id="CLU_089975_0_0_5"/>
<dbReference type="PhylomeDB" id="Q2YJ11"/>
<dbReference type="Proteomes" id="UP000002719">
    <property type="component" value="Chromosome II"/>
</dbReference>
<dbReference type="GO" id="GO:0097367">
    <property type="term" value="F:carbohydrate derivative binding"/>
    <property type="evidence" value="ECO:0007669"/>
    <property type="project" value="InterPro"/>
</dbReference>
<dbReference type="GO" id="GO:1901135">
    <property type="term" value="P:carbohydrate derivative metabolic process"/>
    <property type="evidence" value="ECO:0007669"/>
    <property type="project" value="InterPro"/>
</dbReference>
<dbReference type="CDD" id="cd05013">
    <property type="entry name" value="SIS_RpiR"/>
    <property type="match status" value="1"/>
</dbReference>
<dbReference type="Gene3D" id="3.40.50.10490">
    <property type="entry name" value="Glucose-6-phosphate isomerase like protein, domain 1"/>
    <property type="match status" value="1"/>
</dbReference>
<dbReference type="HAMAP" id="MF_01240">
    <property type="entry name" value="UPF0309"/>
    <property type="match status" value="1"/>
</dbReference>
<dbReference type="InterPro" id="IPR035472">
    <property type="entry name" value="RpiR-like_SIS"/>
</dbReference>
<dbReference type="InterPro" id="IPR001347">
    <property type="entry name" value="SIS_dom"/>
</dbReference>
<dbReference type="InterPro" id="IPR046348">
    <property type="entry name" value="SIS_dom_sf"/>
</dbReference>
<dbReference type="InterPro" id="IPR050099">
    <property type="entry name" value="SIS_GmhA/DiaA_subfam"/>
</dbReference>
<dbReference type="InterPro" id="IPR022951">
    <property type="entry name" value="UPF0309"/>
</dbReference>
<dbReference type="NCBIfam" id="NF002805">
    <property type="entry name" value="PRK02947.1"/>
    <property type="match status" value="1"/>
</dbReference>
<dbReference type="PANTHER" id="PTHR30390:SF7">
    <property type="entry name" value="PHOSPHOHEPTOSE ISOMERASE"/>
    <property type="match status" value="1"/>
</dbReference>
<dbReference type="PANTHER" id="PTHR30390">
    <property type="entry name" value="SEDOHEPTULOSE 7-PHOSPHATE ISOMERASE / DNAA INITIATOR-ASSOCIATING FACTOR FOR REPLICATION INITIATION"/>
    <property type="match status" value="1"/>
</dbReference>
<dbReference type="Pfam" id="PF13580">
    <property type="entry name" value="SIS_2"/>
    <property type="match status" value="1"/>
</dbReference>
<dbReference type="SUPFAM" id="SSF53697">
    <property type="entry name" value="SIS domain"/>
    <property type="match status" value="1"/>
</dbReference>
<dbReference type="PROSITE" id="PS51464">
    <property type="entry name" value="SIS"/>
    <property type="match status" value="1"/>
</dbReference>
<keyword id="KW-1185">Reference proteome</keyword>
<sequence length="242" mass="25608">MTEITDRYFNDVIARLSGLRDRLAAQMEKAADLIAAAARADRRVYVFGTGHSHMMAEELHYRAGGLAITVPILCGSIMLQDGAVASSHFERIEGAVRPILDRYGIRDGDVLVVVSNSGVNAAPIEAARYAREKGAAIIALTSVAYSNTIARGRTQLLSLADVVLDNDAPSGDAVLEIAGSALKVGPVSTALGVTILNAVFADVAARLVGEGDAPIYLSANMPGSGDINRSLVERYRDHNPHL</sequence>
<evidence type="ECO:0000255" key="1">
    <source>
        <dbReference type="HAMAP-Rule" id="MF_01240"/>
    </source>
</evidence>
<feature type="chain" id="PRO_1000066941" description="UPF0309 protein BAB2_0325">
    <location>
        <begin position="1"/>
        <end position="242"/>
    </location>
</feature>
<feature type="domain" description="SIS" evidence="1">
    <location>
        <begin position="30"/>
        <end position="214"/>
    </location>
</feature>
<name>Y2825_BRUA2</name>
<proteinExistence type="inferred from homology"/>
<gene>
    <name type="ordered locus">BAB2_0325</name>
</gene>
<protein>
    <recommendedName>
        <fullName evidence="1">UPF0309 protein BAB2_0325</fullName>
    </recommendedName>
</protein>